<keyword id="KW-0002">3D-structure</keyword>
<keyword id="KW-0089">Bile pigment</keyword>
<keyword id="KW-0150">Chloroplast</keyword>
<keyword id="KW-0157">Chromophore</keyword>
<keyword id="KW-0249">Electron transport</keyword>
<keyword id="KW-0472">Membrane</keyword>
<keyword id="KW-0602">Photosynthesis</keyword>
<keyword id="KW-0934">Plastid</keyword>
<keyword id="KW-0793">Thylakoid</keyword>
<keyword id="KW-0813">Transport</keyword>
<gene>
    <name evidence="3" type="primary">cpeA2</name>
</gene>
<dbReference type="EMBL" id="KC905457">
    <property type="protein sequence ID" value="AGR45602.1"/>
    <property type="molecule type" value="mRNA"/>
</dbReference>
<dbReference type="PDB" id="4LM6">
    <property type="method" value="X-ray"/>
    <property type="resolution" value="1.70 A"/>
    <property type="chains" value="A/C=48-109"/>
</dbReference>
<dbReference type="PDBsum" id="4LM6"/>
<dbReference type="SMR" id="C0HM12"/>
<dbReference type="GO" id="GO:0009535">
    <property type="term" value="C:chloroplast thylakoid membrane"/>
    <property type="evidence" value="ECO:0007669"/>
    <property type="project" value="UniProtKB-SubCell"/>
</dbReference>
<dbReference type="GO" id="GO:0030089">
    <property type="term" value="C:phycobilisome"/>
    <property type="evidence" value="ECO:0007669"/>
    <property type="project" value="InterPro"/>
</dbReference>
<dbReference type="GO" id="GO:0015979">
    <property type="term" value="P:photosynthesis"/>
    <property type="evidence" value="ECO:0007669"/>
    <property type="project" value="UniProtKB-KW"/>
</dbReference>
<dbReference type="Gene3D" id="3.90.510.10">
    <property type="entry name" value="Phycoerythrin alpha chain"/>
    <property type="match status" value="1"/>
</dbReference>
<dbReference type="InterPro" id="IPR011070">
    <property type="entry name" value="Globular_prot_asu/bsu"/>
</dbReference>
<dbReference type="InterPro" id="IPR037011">
    <property type="entry name" value="Phycoerythr-like_a_sf"/>
</dbReference>
<dbReference type="SUPFAM" id="SSF56568">
    <property type="entry name" value="Non-globular alpha+beta subunits of globular proteins"/>
    <property type="match status" value="1"/>
</dbReference>
<proteinExistence type="evidence at protein level"/>
<comment type="function">
    <text evidence="2">Light-harvesting photosynthetic tetrapyrrole chromophore-protein from the phycobiliprotein complex.</text>
</comment>
<comment type="subunit">
    <text evidence="1">Heterotetramer of 2 identical alpha chains and 2 identical beta chains which form 2 alpha-beta heterodimers within the heterotetramer. The two alpha-beta heterodimers are rotated to an open configuration in contrast to the closed configuration found in other cryptophyte species due to the insertion of a single amino acid, Asp-65, in a conserved region of the alpha chain. In the open form, the central chromophores are not in physical contact but are separated by a water-filled channel.</text>
</comment>
<comment type="subcellular location">
    <subcellularLocation>
        <location evidence="2">Plastid</location>
        <location evidence="2">Chloroplast thylakoid membrane</location>
        <topology evidence="2">Peripheral membrane protein</topology>
        <orientation evidence="2">Lumenal side</orientation>
    </subcellularLocation>
</comment>
<comment type="PTM">
    <text evidence="1">Contains three phycocyanobilin chromophores with binding mediated by both the alpha and beta subunits.</text>
</comment>
<comment type="miscellaneous">
    <text evidence="2">The light-harvesting system in Cryptophytes contains phycobiliprotein complexes. Unusually they are composed of either phycoerythrin (CPE) or phycocyanin (CPC) but never allophycocyanin (APC), with only one type of biliprotein being present in any one species. Unlike cyanobacteria or red algae these proteins are not arranged into higher-order phycobilisome complexes, and they are found in the thylakoid lumen.</text>
</comment>
<comment type="similarity">
    <text evidence="2">Belongs to the phycoerythrin family.</text>
</comment>
<geneLocation type="chloroplast" evidence="2"/>
<protein>
    <recommendedName>
        <fullName evidence="2">Phycoerythrin alpha-2 subunit</fullName>
    </recommendedName>
</protein>
<evidence type="ECO:0000269" key="1">
    <source>
    </source>
</evidence>
<evidence type="ECO:0000305" key="2"/>
<evidence type="ECO:0000312" key="3">
    <source>
        <dbReference type="EMBL" id="AGR45602.1"/>
    </source>
</evidence>
<evidence type="ECO:0007744" key="4">
    <source>
        <dbReference type="PDB" id="4LM6"/>
    </source>
</evidence>
<reference evidence="3" key="1">
    <citation type="journal article" date="2014" name="Proc. Natl. Acad. Sci. U.S.A.">
        <title>Single-residue insertion switches the quaternary structure and exciton states of cryptophyte light-harvesting proteins.</title>
        <authorList>
            <person name="Harrop S.J."/>
            <person name="Wilk K.E."/>
            <person name="Dinshaw R."/>
            <person name="Collini E."/>
            <person name="Mirkovic T."/>
            <person name="Teng C.Y."/>
            <person name="Oblinsky D.G."/>
            <person name="Green B.R."/>
            <person name="Hoef-Emden K."/>
            <person name="Hiller R.G."/>
            <person name="Scholes G.D."/>
            <person name="Curmi P.M."/>
        </authorList>
    </citation>
    <scope>NUCLEOTIDE SEQUENCE [MRNA]</scope>
    <scope>X-RAY CRYSTALLOGRAPHY (1.70 ANGSTROMS) OF 48-109 IN COMPLEX WITH PHYCOCYANOBILIN</scope>
    <scope>SUBUNIT</scope>
    <source>
        <strain evidence="3">M1635</strain>
    </source>
</reference>
<accession>C0HM12</accession>
<accession>A0A075B5G1</accession>
<accession>A0A075BTU2</accession>
<organism>
    <name type="scientific">Hemiselmis virescens</name>
    <dbReference type="NCBI Taxonomy" id="77927"/>
    <lineage>
        <taxon>Eukaryota</taxon>
        <taxon>Cryptophyceae</taxon>
        <taxon>Cryptomonadales</taxon>
        <taxon>Hemiselmidaceae</taxon>
        <taxon>Hemiselmis</taxon>
    </lineage>
</organism>
<feature type="chain" id="PRO_0000455545" description="Phycoerythrin alpha-2 subunit">
    <location>
        <begin position="1"/>
        <end position="109"/>
    </location>
</feature>
<feature type="binding site" evidence="1 4">
    <location>
        <position position="6"/>
    </location>
    <ligand>
        <name>(2R,3E)-phycocyanobilin</name>
        <dbReference type="ChEBI" id="CHEBI:85275"/>
        <label>1</label>
        <note>ligand shared with beta subunit</note>
    </ligand>
</feature>
<feature type="binding site" evidence="1 4">
    <location>
        <position position="16"/>
    </location>
    <ligand>
        <name>(2R,3E)-phycocyanobilin</name>
        <dbReference type="ChEBI" id="CHEBI:85275"/>
        <label>3</label>
        <note>ligand shared with beta subunit</note>
    </ligand>
</feature>
<feature type="binding site" evidence="1 4">
    <location>
        <position position="17"/>
    </location>
    <ligand>
        <name>(2R,3E)-phycocyanobilin</name>
        <dbReference type="ChEBI" id="CHEBI:85275"/>
        <label>2</label>
        <note>ligand shared with beta subunit</note>
    </ligand>
</feature>
<feature type="binding site" description="covalent" evidence="1 4">
    <location>
        <position position="20"/>
    </location>
    <ligand>
        <name>(2R,3E)-phycocyanobilin</name>
        <dbReference type="ChEBI" id="CHEBI:85275"/>
        <label>3</label>
        <note>ligand shared with beta subunit</note>
    </ligand>
</feature>
<feature type="binding site" evidence="1 4">
    <location>
        <position position="27"/>
    </location>
    <ligand>
        <name>(2R,3E)-phycocyanobilin</name>
        <dbReference type="ChEBI" id="CHEBI:85275"/>
        <label>3</label>
        <note>ligand shared with beta subunit</note>
    </ligand>
</feature>
<feature type="binding site" evidence="1 4">
    <location>
        <position position="28"/>
    </location>
    <ligand>
        <name>(2R,3E)-phycocyanobilin</name>
        <dbReference type="ChEBI" id="CHEBI:85275"/>
        <label>3</label>
        <note>ligand shared with beta subunit</note>
    </ligand>
</feature>
<feature type="binding site" evidence="1 4">
    <location>
        <position position="39"/>
    </location>
    <ligand>
        <name>(2R,3E)-phycocyanobilin</name>
        <dbReference type="ChEBI" id="CHEBI:85275"/>
        <label>3</label>
        <note>ligand shared with beta subunit</note>
    </ligand>
</feature>
<sequence length="109" mass="11173">MYTKAVLLAFVGSAAAFNAPMMTVRRDAIATGAAAAVVAPLLRPAGAKMATDSKAPLIELFDERDGCKGPAANKASDVGEPGLCVKVSMQKVAMNAAAAKSVATNYMRK</sequence>
<name>PHEA2_HEMVI</name>